<accession>B8GW20</accession>
<organism>
    <name type="scientific">Caulobacter vibrioides (strain NA1000 / CB15N)</name>
    <name type="common">Caulobacter crescentus</name>
    <dbReference type="NCBI Taxonomy" id="565050"/>
    <lineage>
        <taxon>Bacteria</taxon>
        <taxon>Pseudomonadati</taxon>
        <taxon>Pseudomonadota</taxon>
        <taxon>Alphaproteobacteria</taxon>
        <taxon>Caulobacterales</taxon>
        <taxon>Caulobacteraceae</taxon>
        <taxon>Caulobacter</taxon>
    </lineage>
</organism>
<feature type="chain" id="PRO_1000148698" description="Protein-export protein SecB">
    <location>
        <begin position="1"/>
        <end position="163"/>
    </location>
</feature>
<dbReference type="EMBL" id="CP001340">
    <property type="protein sequence ID" value="ACL97323.1"/>
    <property type="molecule type" value="Genomic_DNA"/>
</dbReference>
<dbReference type="RefSeq" id="WP_010921569.1">
    <property type="nucleotide sequence ID" value="NC_011916.1"/>
</dbReference>
<dbReference type="RefSeq" id="YP_002519231.1">
    <property type="nucleotide sequence ID" value="NC_011916.1"/>
</dbReference>
<dbReference type="SMR" id="B8GW20"/>
<dbReference type="GeneID" id="7332706"/>
<dbReference type="KEGG" id="ccs:CCNA_03858"/>
<dbReference type="PATRIC" id="fig|565050.3.peg.3763"/>
<dbReference type="HOGENOM" id="CLU_111574_0_0_5"/>
<dbReference type="OrthoDB" id="9795145at2"/>
<dbReference type="PhylomeDB" id="B8GW20"/>
<dbReference type="Proteomes" id="UP000001364">
    <property type="component" value="Chromosome"/>
</dbReference>
<dbReference type="GO" id="GO:0005737">
    <property type="term" value="C:cytoplasm"/>
    <property type="evidence" value="ECO:0007669"/>
    <property type="project" value="UniProtKB-SubCell"/>
</dbReference>
<dbReference type="GO" id="GO:0051082">
    <property type="term" value="F:unfolded protein binding"/>
    <property type="evidence" value="ECO:0007669"/>
    <property type="project" value="InterPro"/>
</dbReference>
<dbReference type="GO" id="GO:0006457">
    <property type="term" value="P:protein folding"/>
    <property type="evidence" value="ECO:0007669"/>
    <property type="project" value="UniProtKB-UniRule"/>
</dbReference>
<dbReference type="GO" id="GO:0051262">
    <property type="term" value="P:protein tetramerization"/>
    <property type="evidence" value="ECO:0007669"/>
    <property type="project" value="InterPro"/>
</dbReference>
<dbReference type="GO" id="GO:0015031">
    <property type="term" value="P:protein transport"/>
    <property type="evidence" value="ECO:0007669"/>
    <property type="project" value="UniProtKB-UniRule"/>
</dbReference>
<dbReference type="Gene3D" id="3.10.420.10">
    <property type="entry name" value="SecB-like"/>
    <property type="match status" value="1"/>
</dbReference>
<dbReference type="HAMAP" id="MF_00821">
    <property type="entry name" value="SecB"/>
    <property type="match status" value="1"/>
</dbReference>
<dbReference type="InterPro" id="IPR003708">
    <property type="entry name" value="SecB"/>
</dbReference>
<dbReference type="InterPro" id="IPR035958">
    <property type="entry name" value="SecB-like_sf"/>
</dbReference>
<dbReference type="NCBIfam" id="NF004392">
    <property type="entry name" value="PRK05751.1-3"/>
    <property type="match status" value="1"/>
</dbReference>
<dbReference type="NCBIfam" id="TIGR00809">
    <property type="entry name" value="secB"/>
    <property type="match status" value="1"/>
</dbReference>
<dbReference type="PANTHER" id="PTHR36918">
    <property type="match status" value="1"/>
</dbReference>
<dbReference type="PANTHER" id="PTHR36918:SF1">
    <property type="entry name" value="PROTEIN-EXPORT PROTEIN SECB"/>
    <property type="match status" value="1"/>
</dbReference>
<dbReference type="Pfam" id="PF02556">
    <property type="entry name" value="SecB"/>
    <property type="match status" value="1"/>
</dbReference>
<dbReference type="PRINTS" id="PR01594">
    <property type="entry name" value="SECBCHAPRONE"/>
</dbReference>
<dbReference type="SUPFAM" id="SSF54611">
    <property type="entry name" value="SecB-like"/>
    <property type="match status" value="1"/>
</dbReference>
<comment type="function">
    <text evidence="1">One of the proteins required for the normal export of preproteins out of the cell cytoplasm. It is a molecular chaperone that binds to a subset of precursor proteins, maintaining them in a translocation-competent state. It also specifically binds to its receptor SecA.</text>
</comment>
<comment type="subunit">
    <text evidence="1">Homotetramer, a dimer of dimers. One homotetramer interacts with 1 SecA dimer.</text>
</comment>
<comment type="subcellular location">
    <subcellularLocation>
        <location evidence="1">Cytoplasm</location>
    </subcellularLocation>
</comment>
<comment type="similarity">
    <text evidence="1">Belongs to the SecB family.</text>
</comment>
<proteinExistence type="inferred from homology"/>
<reference key="1">
    <citation type="journal article" date="2010" name="J. Bacteriol.">
        <title>The genetic basis of laboratory adaptation in Caulobacter crescentus.</title>
        <authorList>
            <person name="Marks M.E."/>
            <person name="Castro-Rojas C.M."/>
            <person name="Teiling C."/>
            <person name="Du L."/>
            <person name="Kapatral V."/>
            <person name="Walunas T.L."/>
            <person name="Crosson S."/>
        </authorList>
    </citation>
    <scope>NUCLEOTIDE SEQUENCE [LARGE SCALE GENOMIC DNA]</scope>
    <source>
        <strain>NA1000 / CB15N</strain>
    </source>
</reference>
<protein>
    <recommendedName>
        <fullName evidence="1">Protein-export protein SecB</fullName>
    </recommendedName>
</protein>
<keyword id="KW-0143">Chaperone</keyword>
<keyword id="KW-0963">Cytoplasm</keyword>
<keyword id="KW-0653">Protein transport</keyword>
<keyword id="KW-1185">Reference proteome</keyword>
<keyword id="KW-0811">Translocation</keyword>
<keyword id="KW-0813">Transport</keyword>
<name>SECB_CAUVN</name>
<sequence>MTDTIAPEATPEGAEAGQAGIRILAQFVRDFSFENPLAPDALRAGAAQPAIDMGVEMNARGRADGLFEVDLKLSARAEREGQAVFHVEVVYGGLFHIAGIAEEDLEPVLLIECPRFLFPYARRLISDVTAEGGFPPFLIDPIDFAGVYAARKAQAEGQQVGNA</sequence>
<evidence type="ECO:0000255" key="1">
    <source>
        <dbReference type="HAMAP-Rule" id="MF_00821"/>
    </source>
</evidence>
<gene>
    <name evidence="1" type="primary">secB</name>
    <name type="ordered locus">CCNA_03858</name>
</gene>